<evidence type="ECO:0000269" key="1">
    <source>
    </source>
</evidence>
<evidence type="ECO:0000269" key="2">
    <source>
    </source>
</evidence>
<evidence type="ECO:0000303" key="3">
    <source>
    </source>
</evidence>
<evidence type="ECO:0000305" key="4"/>
<evidence type="ECO:0000305" key="5">
    <source>
    </source>
</evidence>
<evidence type="ECO:0000305" key="6">
    <source>
    </source>
</evidence>
<evidence type="ECO:0007744" key="7">
    <source>
        <dbReference type="PDB" id="8UXR"/>
    </source>
</evidence>
<organism>
    <name type="scientific">Conus textile</name>
    <name type="common">Cloth-of-gold cone</name>
    <dbReference type="NCBI Taxonomy" id="6494"/>
    <lineage>
        <taxon>Eukaryota</taxon>
        <taxon>Metazoa</taxon>
        <taxon>Spiralia</taxon>
        <taxon>Lophotrochozoa</taxon>
        <taxon>Mollusca</taxon>
        <taxon>Gastropoda</taxon>
        <taxon>Caenogastropoda</taxon>
        <taxon>Neogastropoda</taxon>
        <taxon>Conoidea</taxon>
        <taxon>Conidae</taxon>
        <taxon>Conus</taxon>
        <taxon>Cylinder</taxon>
    </lineage>
</organism>
<keyword id="KW-0002">3D-structure</keyword>
<keyword id="KW-0903">Direct protein sequencing</keyword>
<keyword id="KW-1015">Disulfide bond</keyword>
<keyword id="KW-0379">Hydroxylation</keyword>
<keyword id="KW-0964">Secreted</keyword>
<keyword id="KW-0800">Toxin</keyword>
<dbReference type="PDB" id="8UXR">
    <property type="method" value="NMR"/>
    <property type="chains" value="A=1-23"/>
</dbReference>
<dbReference type="PDBsum" id="8UXR"/>
<dbReference type="SMR" id="P0DPM3"/>
<dbReference type="GO" id="GO:0005576">
    <property type="term" value="C:extracellular region"/>
    <property type="evidence" value="ECO:0007669"/>
    <property type="project" value="UniProtKB-SubCell"/>
</dbReference>
<dbReference type="GO" id="GO:0090729">
    <property type="term" value="F:toxin activity"/>
    <property type="evidence" value="ECO:0007669"/>
    <property type="project" value="UniProtKB-KW"/>
</dbReference>
<sequence length="23" mass="2495">NCPYCVVYCCPPAYCQASGCRPP</sequence>
<accession>P0DPM3</accession>
<feature type="peptide" id="PRO_0000445063" description="Conotoxin Tx6.5" evidence="1 2">
    <location>
        <begin position="1"/>
        <end position="23"/>
    </location>
</feature>
<feature type="modified residue" description="4-hydroxyproline; partial" evidence="1">
    <location>
        <position position="12"/>
    </location>
</feature>
<feature type="disulfide bond" evidence="2 7">
    <location>
        <begin position="2"/>
        <end position="10"/>
    </location>
</feature>
<feature type="disulfide bond" evidence="2 7">
    <location>
        <begin position="5"/>
        <end position="15"/>
    </location>
</feature>
<feature type="disulfide bond" evidence="2 7">
    <location>
        <begin position="9"/>
        <end position="20"/>
    </location>
</feature>
<name>CU7B_CONTE</name>
<proteinExistence type="evidence at protein level"/>
<comment type="subcellular location">
    <subcellularLocation>
        <location evidence="1 2">Secreted</location>
    </subcellularLocation>
</comment>
<comment type="tissue specificity">
    <text evidence="5 6">Expressed by the venom duct.</text>
</comment>
<comment type="domain">
    <text evidence="4">The cysteine framework is VI/VII (C-C-CC-C-C).</text>
</comment>
<comment type="domain">
    <text evidence="2">Displays a mini-granulin fold, a structure composed of two short, stacked beta-hairpins connected by two parallel disulfide bonds. This newly described fold is derived from the same cysteine connectivity as knottins (ICK fold). The name 'mini-granulin fold' comes from the structural homology with the N-terminal region of the human granulin.</text>
</comment>
<comment type="mass spectrometry" mass="2488.4" method="MALDI" evidence="2"/>
<comment type="miscellaneous">
    <text evidence="2">Negative results: Does not affect sodium channels Nav1.2/SCN2A, Nav1.7/SCN9A and Nav1.8/SCN10A, acetylcholine receptors alpha-3/CHRNA3 and alpha-7/CHRNA7, calcium channels Cav1.3/CACNA1D and Cav2.2/CACNA1B. Does not impact cell proliferation.</text>
</comment>
<comment type="miscellaneous">
    <text evidence="2">Exists in two forms, due to cis-trans isomerization at 11-Pro-Pro-12.</text>
</comment>
<comment type="similarity">
    <text evidence="6">Belongs to the conotoxin U superfamily.</text>
</comment>
<protein>
    <recommendedName>
        <fullName evidence="4">Conotoxin Tx6.5</fullName>
    </recommendedName>
    <alternativeName>
        <fullName evidence="3">TxVIIB</fullName>
    </alternativeName>
</protein>
<reference key="1">
    <citation type="journal article" date="2012" name="J. Proteome Res.">
        <title>Constrained de novo sequencing of conotoxins.</title>
        <authorList>
            <person name="Bhatia S."/>
            <person name="Kil Y.J."/>
            <person name="Ueberheide B."/>
            <person name="Chait B.T."/>
            <person name="Tayo L."/>
            <person name="Cruz L."/>
            <person name="Lu B."/>
            <person name="Yates J.R. III"/>
            <person name="Bern M."/>
        </authorList>
    </citation>
    <scope>PROTEIN SEQUENCE</scope>
    <scope>IDENTIFICATION BY MASS SPECTROMETRY</scope>
    <scope>SUBCELLULAR LOCATION</scope>
    <scope>HYDROXYLATION AT PRO-12</scope>
    <source>
        <tissue>Venom</tissue>
    </source>
</reference>
<reference key="2">
    <citation type="journal article" date="2024" name="J. Biol. Chem.">
        <title>Structural analysis of a U-superfamily conotoxin containing a mini-granulin fold: Insights into key features that distinguish between the ICK and granulin folds.</title>
        <authorList>
            <person name="Raffaelli T."/>
            <person name="Wilson D.T."/>
            <person name="Dutertre S."/>
            <person name="Giribaldi J."/>
            <person name="Vetter I."/>
            <person name="Robinson S.D."/>
            <person name="Thapa A."/>
            <person name="Widi A."/>
            <person name="Loukas A."/>
            <person name="Daly N.L."/>
        </authorList>
    </citation>
    <scope>STRUCTURE BY NMR</scope>
    <scope>MASS SPECTROMETRY</scope>
    <scope>SYNTHESIS</scope>
    <scope>SUBCELLULAR LOCATION</scope>
    <source>
        <tissue>Venom</tissue>
    </source>
</reference>